<dbReference type="EMBL" id="U33050">
    <property type="protein sequence ID" value="AAB64922.1"/>
    <property type="status" value="ALT_INIT"/>
    <property type="molecule type" value="Genomic_DNA"/>
</dbReference>
<dbReference type="EMBL" id="AY558173">
    <property type="protein sequence ID" value="AAS56499.1"/>
    <property type="status" value="ALT_INIT"/>
    <property type="molecule type" value="Genomic_DNA"/>
</dbReference>
<dbReference type="EMBL" id="BK006938">
    <property type="protein sequence ID" value="DAA12319.1"/>
    <property type="molecule type" value="Genomic_DNA"/>
</dbReference>
<dbReference type="PIR" id="S69653">
    <property type="entry name" value="S69653"/>
</dbReference>
<dbReference type="RefSeq" id="NP_010774.4">
    <property type="nucleotide sequence ID" value="NM_001180794.3"/>
</dbReference>
<dbReference type="PDB" id="2LUH">
    <property type="method" value="NMR"/>
    <property type="chains" value="B=128-186"/>
</dbReference>
<dbReference type="PDBsum" id="2LUH"/>
<dbReference type="BMRB" id="Q03390"/>
<dbReference type="SMR" id="Q03390"/>
<dbReference type="BioGRID" id="32538">
    <property type="interactions" value="292"/>
</dbReference>
<dbReference type="DIP" id="DIP-8785N"/>
<dbReference type="FunCoup" id="Q03390">
    <property type="interactions" value="427"/>
</dbReference>
<dbReference type="IntAct" id="Q03390">
    <property type="interactions" value="4"/>
</dbReference>
<dbReference type="MINT" id="Q03390"/>
<dbReference type="STRING" id="4932.YDR486C"/>
<dbReference type="TCDB" id="3.A.31.1.1">
    <property type="family name" value="the endosomal sorting complexes required for transport iii (escrt-iii) family"/>
</dbReference>
<dbReference type="iPTMnet" id="Q03390"/>
<dbReference type="PaxDb" id="4932-YDR486C"/>
<dbReference type="PeptideAtlas" id="Q03390"/>
<dbReference type="TopDownProteomics" id="Q03390"/>
<dbReference type="EnsemblFungi" id="YDR486C_mRNA">
    <property type="protein sequence ID" value="YDR486C"/>
    <property type="gene ID" value="YDR486C"/>
</dbReference>
<dbReference type="GeneID" id="852097"/>
<dbReference type="KEGG" id="sce:YDR486C"/>
<dbReference type="AGR" id="SGD:S000002894"/>
<dbReference type="SGD" id="S000002894">
    <property type="gene designation" value="VPS60"/>
</dbReference>
<dbReference type="VEuPathDB" id="FungiDB:YDR486C"/>
<dbReference type="eggNOG" id="KOG1655">
    <property type="taxonomic scope" value="Eukaryota"/>
</dbReference>
<dbReference type="GeneTree" id="ENSGT00550000074817"/>
<dbReference type="HOGENOM" id="CLU_079409_0_0_1"/>
<dbReference type="InParanoid" id="Q03390"/>
<dbReference type="OMA" id="GVKQMQK"/>
<dbReference type="OrthoDB" id="3973241at2759"/>
<dbReference type="BioCyc" id="YEAST:G3O-30011-MONOMER"/>
<dbReference type="Reactome" id="R-SCE-917729">
    <property type="pathway name" value="Endosomal Sorting Complex Required For Transport (ESCRT)"/>
</dbReference>
<dbReference type="BioGRID-ORCS" id="852097">
    <property type="hits" value="1 hit in 10 CRISPR screens"/>
</dbReference>
<dbReference type="EvolutionaryTrace" id="Q03390"/>
<dbReference type="PRO" id="PR:Q03390"/>
<dbReference type="Proteomes" id="UP000002311">
    <property type="component" value="Chromosome IV"/>
</dbReference>
<dbReference type="RNAct" id="Q03390">
    <property type="molecule type" value="protein"/>
</dbReference>
<dbReference type="GO" id="GO:0005737">
    <property type="term" value="C:cytoplasm"/>
    <property type="evidence" value="ECO:0007005"/>
    <property type="project" value="SGD"/>
</dbReference>
<dbReference type="GO" id="GO:0010008">
    <property type="term" value="C:endosome membrane"/>
    <property type="evidence" value="ECO:0007669"/>
    <property type="project" value="UniProtKB-SubCell"/>
</dbReference>
<dbReference type="GO" id="GO:0000329">
    <property type="term" value="C:fungal-type vacuole membrane"/>
    <property type="evidence" value="ECO:0000314"/>
    <property type="project" value="SGD"/>
</dbReference>
<dbReference type="GO" id="GO:0005771">
    <property type="term" value="C:multivesicular body"/>
    <property type="evidence" value="ECO:0000318"/>
    <property type="project" value="GO_Central"/>
</dbReference>
<dbReference type="GO" id="GO:0032511">
    <property type="term" value="P:late endosome to vacuole transport via multivesicular body sorting pathway"/>
    <property type="evidence" value="ECO:0000316"/>
    <property type="project" value="SGD"/>
</dbReference>
<dbReference type="GO" id="GO:0015031">
    <property type="term" value="P:protein transport"/>
    <property type="evidence" value="ECO:0007669"/>
    <property type="project" value="UniProtKB-KW"/>
</dbReference>
<dbReference type="GO" id="GO:0006900">
    <property type="term" value="P:vesicle budding from membrane"/>
    <property type="evidence" value="ECO:0000318"/>
    <property type="project" value="GO_Central"/>
</dbReference>
<dbReference type="Gene3D" id="6.10.250.1710">
    <property type="match status" value="1"/>
</dbReference>
<dbReference type="InterPro" id="IPR005024">
    <property type="entry name" value="Snf7_fam"/>
</dbReference>
<dbReference type="PANTHER" id="PTHR22761">
    <property type="entry name" value="CHARGED MULTIVESICULAR BODY PROTEIN"/>
    <property type="match status" value="1"/>
</dbReference>
<dbReference type="PANTHER" id="PTHR22761:SF12">
    <property type="entry name" value="CHARGED MULTIVESICULAR BODY PROTEIN 5"/>
    <property type="match status" value="1"/>
</dbReference>
<dbReference type="Pfam" id="PF03357">
    <property type="entry name" value="Snf7"/>
    <property type="match status" value="1"/>
</dbReference>
<feature type="chain" id="PRO_0000211507" description="Vacuolar protein-sorting-associated protein 60">
    <location>
        <begin position="1"/>
        <end position="229"/>
    </location>
</feature>
<feature type="region of interest" description="Interaction with VTA1">
    <location>
        <begin position="128"/>
        <end position="159"/>
    </location>
</feature>
<feature type="region of interest" description="Disordered" evidence="2">
    <location>
        <begin position="186"/>
        <end position="229"/>
    </location>
</feature>
<feature type="coiled-coil region" evidence="1">
    <location>
        <begin position="9"/>
        <end position="155"/>
    </location>
</feature>
<feature type="compositionally biased region" description="Basic and acidic residues" evidence="2">
    <location>
        <begin position="218"/>
        <end position="229"/>
    </location>
</feature>
<feature type="modified residue" description="Phosphoserine" evidence="9">
    <location>
        <position position="12"/>
    </location>
</feature>
<feature type="mutagenesis site" description="Abolishes interaction with VTA1 and reduces endosomal localization." evidence="7">
    <original>IEQGD</original>
    <variation>AAAAA</variation>
    <location>
        <begin position="144"/>
        <end position="148"/>
    </location>
</feature>
<feature type="helix" evidence="10">
    <location>
        <begin position="129"/>
        <end position="134"/>
    </location>
</feature>
<feature type="helix" evidence="10">
    <location>
        <begin position="140"/>
        <end position="158"/>
    </location>
</feature>
<feature type="helix" evidence="10">
    <location>
        <begin position="163"/>
        <end position="165"/>
    </location>
</feature>
<feature type="helix" evidence="10">
    <location>
        <begin position="168"/>
        <end position="182"/>
    </location>
</feature>
<protein>
    <recommendedName>
        <fullName>Vacuolar protein-sorting-associated protein 60</fullName>
    </recommendedName>
    <alternativeName>
        <fullName>Charged multivesicular body protein 5</fullName>
    </alternativeName>
</protein>
<evidence type="ECO:0000255" key="1"/>
<evidence type="ECO:0000256" key="2">
    <source>
        <dbReference type="SAM" id="MobiDB-lite"/>
    </source>
</evidence>
<evidence type="ECO:0000269" key="3">
    <source>
    </source>
</evidence>
<evidence type="ECO:0000269" key="4">
    <source>
    </source>
</evidence>
<evidence type="ECO:0000269" key="5">
    <source>
    </source>
</evidence>
<evidence type="ECO:0000269" key="6">
    <source>
    </source>
</evidence>
<evidence type="ECO:0000269" key="7">
    <source>
    </source>
</evidence>
<evidence type="ECO:0000305" key="8"/>
<evidence type="ECO:0007744" key="9">
    <source>
    </source>
</evidence>
<evidence type="ECO:0007829" key="10">
    <source>
        <dbReference type="PDB" id="2LUH"/>
    </source>
</evidence>
<organism>
    <name type="scientific">Saccharomyces cerevisiae (strain ATCC 204508 / S288c)</name>
    <name type="common">Baker's yeast</name>
    <dbReference type="NCBI Taxonomy" id="559292"/>
    <lineage>
        <taxon>Eukaryota</taxon>
        <taxon>Fungi</taxon>
        <taxon>Dikarya</taxon>
        <taxon>Ascomycota</taxon>
        <taxon>Saccharomycotina</taxon>
        <taxon>Saccharomycetes</taxon>
        <taxon>Saccharomycetales</taxon>
        <taxon>Saccharomycetaceae</taxon>
        <taxon>Saccharomyces</taxon>
    </lineage>
</organism>
<accession>Q03390</accession>
<accession>D6VTA9</accession>
<name>VPS60_YEAST</name>
<proteinExistence type="evidence at protein level"/>
<comment type="function">
    <text evidence="3 5 7">Has a role in a late stage of multivesicular body (MVB) formation. Can stimulate VPS4 ATPase activity via VTA1.</text>
</comment>
<comment type="subunit">
    <text evidence="5 6 7">Interacts with VTA1; the interaction occurs at he endosomal membrane.</text>
</comment>
<comment type="interaction">
    <interactant intactId="EBI-2090142">
        <id>Q03390</id>
    </interactant>
    <interactant intactId="EBI-17554">
        <id>P39929</id>
        <label>SNF7</label>
    </interactant>
    <organismsDiffer>false</organismsDiffer>
    <experiments>3</experiments>
</comment>
<comment type="interaction">
    <interactant intactId="EBI-2090142">
        <id>Q03390</id>
    </interactant>
    <interactant intactId="EBI-37098">
        <id>Q06263</id>
        <label>VTA1</label>
    </interactant>
    <organismsDiffer>false</organismsDiffer>
    <experiments>3</experiments>
</comment>
<comment type="subcellular location">
    <subcellularLocation>
        <location>Endosome membrane</location>
        <topology>Peripheral membrane protein</topology>
    </subcellularLocation>
    <subcellularLocation>
        <location>Vacuole membrane</location>
        <topology>Peripheral membrane protein</topology>
    </subcellularLocation>
</comment>
<comment type="miscellaneous">
    <text evidence="4">Present with 2110 molecules/cell in log phase SD medium.</text>
</comment>
<comment type="similarity">
    <text evidence="8">Belongs to the SNF7 family.</text>
</comment>
<comment type="sequence caution" evidence="8">
    <conflict type="erroneous initiation">
        <sequence resource="EMBL-CDS" id="AAB64922"/>
    </conflict>
</comment>
<comment type="sequence caution" evidence="8">
    <conflict type="erroneous initiation">
        <sequence resource="EMBL-CDS" id="AAS56499"/>
    </conflict>
</comment>
<keyword id="KW-0002">3D-structure</keyword>
<keyword id="KW-0175">Coiled coil</keyword>
<keyword id="KW-0967">Endosome</keyword>
<keyword id="KW-0472">Membrane</keyword>
<keyword id="KW-0597">Phosphoprotein</keyword>
<keyword id="KW-0653">Protein transport</keyword>
<keyword id="KW-1185">Reference proteome</keyword>
<keyword id="KW-0813">Transport</keyword>
<keyword id="KW-0926">Vacuole</keyword>
<gene>
    <name type="primary">VPS60</name>
    <name type="synonym">CHM5</name>
    <name type="synonym">MOS10</name>
    <name type="ordered locus">YDR486C</name>
</gene>
<sequence>MNRIFGYGNKKSHDQLLQESNQSMNQAQQSLSNRISQLDTQIAQLNFQLQNIQKNLQRSNNKQPSLRKQALKILNKRKQLENMKDSLDSQSWSMTQAQLTNDNLQNTMITINALKQTNNAMKAQYGKINIDKLQDMQDEMLDLIEQGDELQEVLAMNNNSGELDDISDAELDAELDALAQEDFTLPTSENSLGNDMPSYLLGANAPPAFIDEEPNLDTEDKNKALESAQ</sequence>
<reference key="1">
    <citation type="journal article" date="1997" name="Nature">
        <title>The nucleotide sequence of Saccharomyces cerevisiae chromosome IV.</title>
        <authorList>
            <person name="Jacq C."/>
            <person name="Alt-Moerbe J."/>
            <person name="Andre B."/>
            <person name="Arnold W."/>
            <person name="Bahr A."/>
            <person name="Ballesta J.P.G."/>
            <person name="Bargues M."/>
            <person name="Baron L."/>
            <person name="Becker A."/>
            <person name="Biteau N."/>
            <person name="Bloecker H."/>
            <person name="Blugeon C."/>
            <person name="Boskovic J."/>
            <person name="Brandt P."/>
            <person name="Brueckner M."/>
            <person name="Buitrago M.J."/>
            <person name="Coster F."/>
            <person name="Delaveau T."/>
            <person name="del Rey F."/>
            <person name="Dujon B."/>
            <person name="Eide L.G."/>
            <person name="Garcia-Cantalejo J.M."/>
            <person name="Goffeau A."/>
            <person name="Gomez-Peris A."/>
            <person name="Granotier C."/>
            <person name="Hanemann V."/>
            <person name="Hankeln T."/>
            <person name="Hoheisel J.D."/>
            <person name="Jaeger W."/>
            <person name="Jimenez A."/>
            <person name="Jonniaux J.-L."/>
            <person name="Kraemer C."/>
            <person name="Kuester H."/>
            <person name="Laamanen P."/>
            <person name="Legros Y."/>
            <person name="Louis E.J."/>
            <person name="Moeller-Rieker S."/>
            <person name="Monnet A."/>
            <person name="Moro M."/>
            <person name="Mueller-Auer S."/>
            <person name="Nussbaumer B."/>
            <person name="Paricio N."/>
            <person name="Paulin L."/>
            <person name="Perea J."/>
            <person name="Perez-Alonso M."/>
            <person name="Perez-Ortin J.E."/>
            <person name="Pohl T.M."/>
            <person name="Prydz H."/>
            <person name="Purnelle B."/>
            <person name="Rasmussen S.W."/>
            <person name="Remacha M.A."/>
            <person name="Revuelta J.L."/>
            <person name="Rieger M."/>
            <person name="Salom D."/>
            <person name="Saluz H.P."/>
            <person name="Saiz J.E."/>
            <person name="Saren A.-M."/>
            <person name="Schaefer M."/>
            <person name="Scharfe M."/>
            <person name="Schmidt E.R."/>
            <person name="Schneider C."/>
            <person name="Scholler P."/>
            <person name="Schwarz S."/>
            <person name="Soler-Mira A."/>
            <person name="Urrestarazu L.A."/>
            <person name="Verhasselt P."/>
            <person name="Vissers S."/>
            <person name="Voet M."/>
            <person name="Volckaert G."/>
            <person name="Wagner G."/>
            <person name="Wambutt R."/>
            <person name="Wedler E."/>
            <person name="Wedler H."/>
            <person name="Woelfl S."/>
            <person name="Harris D.E."/>
            <person name="Bowman S."/>
            <person name="Brown D."/>
            <person name="Churcher C.M."/>
            <person name="Connor R."/>
            <person name="Dedman K."/>
            <person name="Gentles S."/>
            <person name="Hamlin N."/>
            <person name="Hunt S."/>
            <person name="Jones L."/>
            <person name="McDonald S."/>
            <person name="Murphy L.D."/>
            <person name="Niblett D."/>
            <person name="Odell C."/>
            <person name="Oliver K."/>
            <person name="Rajandream M.A."/>
            <person name="Richards C."/>
            <person name="Shore L."/>
            <person name="Walsh S.V."/>
            <person name="Barrell B.G."/>
            <person name="Dietrich F.S."/>
            <person name="Mulligan J.T."/>
            <person name="Allen E."/>
            <person name="Araujo R."/>
            <person name="Aviles E."/>
            <person name="Berno A."/>
            <person name="Carpenter J."/>
            <person name="Chen E."/>
            <person name="Cherry J.M."/>
            <person name="Chung E."/>
            <person name="Duncan M."/>
            <person name="Hunicke-Smith S."/>
            <person name="Hyman R.W."/>
            <person name="Komp C."/>
            <person name="Lashkari D."/>
            <person name="Lew H."/>
            <person name="Lin D."/>
            <person name="Mosedale D."/>
            <person name="Nakahara K."/>
            <person name="Namath A."/>
            <person name="Oefner P."/>
            <person name="Oh C."/>
            <person name="Petel F.X."/>
            <person name="Roberts D."/>
            <person name="Schramm S."/>
            <person name="Schroeder M."/>
            <person name="Shogren T."/>
            <person name="Shroff N."/>
            <person name="Winant A."/>
            <person name="Yelton M.A."/>
            <person name="Botstein D."/>
            <person name="Davis R.W."/>
            <person name="Johnston M."/>
            <person name="Andrews S."/>
            <person name="Brinkman R."/>
            <person name="Cooper J."/>
            <person name="Ding H."/>
            <person name="Du Z."/>
            <person name="Favello A."/>
            <person name="Fulton L."/>
            <person name="Gattung S."/>
            <person name="Greco T."/>
            <person name="Hallsworth K."/>
            <person name="Hawkins J."/>
            <person name="Hillier L.W."/>
            <person name="Jier M."/>
            <person name="Johnson D."/>
            <person name="Johnston L."/>
            <person name="Kirsten J."/>
            <person name="Kucaba T."/>
            <person name="Langston Y."/>
            <person name="Latreille P."/>
            <person name="Le T."/>
            <person name="Mardis E."/>
            <person name="Menezes S."/>
            <person name="Miller N."/>
            <person name="Nhan M."/>
            <person name="Pauley A."/>
            <person name="Peluso D."/>
            <person name="Rifkin L."/>
            <person name="Riles L."/>
            <person name="Taich A."/>
            <person name="Trevaskis E."/>
            <person name="Vignati D."/>
            <person name="Wilcox L."/>
            <person name="Wohldman P."/>
            <person name="Vaudin M."/>
            <person name="Wilson R."/>
            <person name="Waterston R."/>
            <person name="Albermann K."/>
            <person name="Hani J."/>
            <person name="Heumann K."/>
            <person name="Kleine K."/>
            <person name="Mewes H.-W."/>
            <person name="Zollner A."/>
            <person name="Zaccaria P."/>
        </authorList>
    </citation>
    <scope>NUCLEOTIDE SEQUENCE [LARGE SCALE GENOMIC DNA]</scope>
    <source>
        <strain>ATCC 204508 / S288c</strain>
    </source>
</reference>
<reference key="2">
    <citation type="journal article" date="2014" name="G3 (Bethesda)">
        <title>The reference genome sequence of Saccharomyces cerevisiae: Then and now.</title>
        <authorList>
            <person name="Engel S.R."/>
            <person name="Dietrich F.S."/>
            <person name="Fisk D.G."/>
            <person name="Binkley G."/>
            <person name="Balakrishnan R."/>
            <person name="Costanzo M.C."/>
            <person name="Dwight S.S."/>
            <person name="Hitz B.C."/>
            <person name="Karra K."/>
            <person name="Nash R.S."/>
            <person name="Weng S."/>
            <person name="Wong E.D."/>
            <person name="Lloyd P."/>
            <person name="Skrzypek M.S."/>
            <person name="Miyasato S.R."/>
            <person name="Simison M."/>
            <person name="Cherry J.M."/>
        </authorList>
    </citation>
    <scope>GENOME REANNOTATION</scope>
    <source>
        <strain>ATCC 204508 / S288c</strain>
    </source>
</reference>
<reference key="3">
    <citation type="journal article" date="2007" name="Genome Res.">
        <title>Approaching a complete repository of sequence-verified protein-encoding clones for Saccharomyces cerevisiae.</title>
        <authorList>
            <person name="Hu Y."/>
            <person name="Rolfs A."/>
            <person name="Bhullar B."/>
            <person name="Murthy T.V.S."/>
            <person name="Zhu C."/>
            <person name="Berger M.F."/>
            <person name="Camargo A.A."/>
            <person name="Kelley F."/>
            <person name="McCarron S."/>
            <person name="Jepson D."/>
            <person name="Richardson A."/>
            <person name="Raphael J."/>
            <person name="Moreira D."/>
            <person name="Taycher E."/>
            <person name="Zuo D."/>
            <person name="Mohr S."/>
            <person name="Kane M.F."/>
            <person name="Williamson J."/>
            <person name="Simpson A.J.G."/>
            <person name="Bulyk M.L."/>
            <person name="Harlow E."/>
            <person name="Marsischky G."/>
            <person name="Kolodner R.D."/>
            <person name="LaBaer J."/>
        </authorList>
    </citation>
    <scope>NUCLEOTIDE SEQUENCE [GENOMIC DNA]</scope>
    <source>
        <strain>ATCC 204508 / S288c</strain>
    </source>
</reference>
<reference key="4">
    <citation type="journal article" date="2001" name="J. Cell Sci.">
        <title>CHMP1 functions as a member of a newly defined family of vesicle trafficking proteins.</title>
        <authorList>
            <person name="Howard T.L."/>
            <person name="Stauffer D.R."/>
            <person name="Degnin C.R."/>
            <person name="Hollenberg S.M."/>
        </authorList>
    </citation>
    <scope>FUNCTION</scope>
</reference>
<reference key="5">
    <citation type="journal article" date="2003" name="Nature">
        <title>Sequencing and comparison of yeast species to identify genes and regulatory elements.</title>
        <authorList>
            <person name="Kellis M."/>
            <person name="Patterson N."/>
            <person name="Endrizzi M."/>
            <person name="Birren B.W."/>
            <person name="Lander E.S."/>
        </authorList>
    </citation>
    <scope>IDENTIFICATION OF PROBABLE INITIATION SITE</scope>
</reference>
<reference key="6">
    <citation type="journal article" date="2003" name="Nature">
        <title>Global analysis of protein localization in budding yeast.</title>
        <authorList>
            <person name="Huh W.-K."/>
            <person name="Falvo J.V."/>
            <person name="Gerke L.C."/>
            <person name="Carroll A.S."/>
            <person name="Howson R.W."/>
            <person name="Weissman J.S."/>
            <person name="O'Shea E.K."/>
        </authorList>
    </citation>
    <scope>SUBCELLULAR LOCATION [LARGE SCALE ANALYSIS]</scope>
</reference>
<reference key="7">
    <citation type="journal article" date="2003" name="Nature">
        <title>Global analysis of protein expression in yeast.</title>
        <authorList>
            <person name="Ghaemmaghami S."/>
            <person name="Huh W.-K."/>
            <person name="Bower K."/>
            <person name="Howson R.W."/>
            <person name="Belle A."/>
            <person name="Dephoure N."/>
            <person name="O'Shea E.K."/>
            <person name="Weissman J.S."/>
        </authorList>
    </citation>
    <scope>LEVEL OF PROTEIN EXPRESSION [LARGE SCALE ANALYSIS]</scope>
</reference>
<reference key="8">
    <citation type="journal article" date="2004" name="J. Biol. Chem.">
        <title>Characterization of Vta1p, a class E Vps protein in Saccharomyces cerevisiae.</title>
        <authorList>
            <person name="Shiflett S.L."/>
            <person name="Ward D.M."/>
            <person name="Huynh D."/>
            <person name="Vaughn M.B."/>
            <person name="Simmons J.C."/>
            <person name="Kaplan J."/>
        </authorList>
    </citation>
    <scope>FUNCTION</scope>
    <scope>INTERACTION WITH VTA1</scope>
    <scope>SUBCELLULAR LOCATION</scope>
</reference>
<reference key="9">
    <citation type="journal article" date="2008" name="Dev. Cell">
        <title>ESCRT-III family members stimulate Vps4 ATPase activity directly or via Vta1.</title>
        <authorList>
            <person name="Azmi I.F."/>
            <person name="Davies B.A."/>
            <person name="Xiao J."/>
            <person name="Babst M."/>
            <person name="Xu Z."/>
            <person name="Katzmann D.J."/>
        </authorList>
    </citation>
    <scope>FUNCTION</scope>
    <scope>INTERACTION WITH VTA1</scope>
    <scope>MUTAGENESIS OF 144-ILE--ASP-148</scope>
</reference>
<reference key="10">
    <citation type="journal article" date="2008" name="Mol. Biol. Cell">
        <title>Novel Ist1-Did2 complex functions at a late step in multivesicular body sorting.</title>
        <authorList>
            <person name="Rue S.M."/>
            <person name="Mattei S."/>
            <person name="Saksena S."/>
            <person name="Emr S.D."/>
        </authorList>
    </citation>
    <scope>INTERACTION WITH VTA1</scope>
</reference>
<reference key="11">
    <citation type="journal article" date="2009" name="Science">
        <title>Global analysis of Cdk1 substrate phosphorylation sites provides insights into evolution.</title>
        <authorList>
            <person name="Holt L.J."/>
            <person name="Tuch B.B."/>
            <person name="Villen J."/>
            <person name="Johnson A.D."/>
            <person name="Gygi S.P."/>
            <person name="Morgan D.O."/>
        </authorList>
    </citation>
    <scope>PHOSPHORYLATION [LARGE SCALE ANALYSIS] AT SER-12</scope>
    <scope>IDENTIFICATION BY MASS SPECTROMETRY [LARGE SCALE ANALYSIS]</scope>
</reference>